<sequence length="219" mass="24470">MPKAFLIDTTRCTACRGCQLACKEWHDLPANVTKQRGSHQNPPDLNPNNLKIVRFNERMNEKGVVIWNFFPDQCRHCVTPVCVDVADMAVPGAMIKDKKTGAVLATEKSAKLSPADAKAVAEACPYNIPRIDPKTKRITKCDMCFDRVSAGMQPICVKTCPTGTMAFGERDEMLALAEKRLADAKTRFPKAHLVDVEDVSVIYLLAEEKEHYYEYAGFM</sequence>
<gene>
    <name evidence="7" type="ordered locus">DVU_2811</name>
</gene>
<proteinExistence type="evidence at protein level"/>
<reference key="1">
    <citation type="journal article" date="2004" name="Nat. Biotechnol.">
        <title>The genome sequence of the anaerobic, sulfate-reducing bacterium Desulfovibrio vulgaris Hildenborough.</title>
        <authorList>
            <person name="Heidelberg J.F."/>
            <person name="Seshadri R."/>
            <person name="Haveman S.A."/>
            <person name="Hemme C.L."/>
            <person name="Paulsen I.T."/>
            <person name="Kolonay J.F."/>
            <person name="Eisen J.A."/>
            <person name="Ward N.L."/>
            <person name="Methe B.A."/>
            <person name="Brinkac L.M."/>
            <person name="Daugherty S.C."/>
            <person name="DeBoy R.T."/>
            <person name="Dodson R.J."/>
            <person name="Durkin A.S."/>
            <person name="Madupu R."/>
            <person name="Nelson W.C."/>
            <person name="Sullivan S.A."/>
            <person name="Fouts D.E."/>
            <person name="Haft D.H."/>
            <person name="Selengut J."/>
            <person name="Peterson J.D."/>
            <person name="Davidsen T.M."/>
            <person name="Zafar N."/>
            <person name="Zhou L."/>
            <person name="Radune D."/>
            <person name="Dimitrov G."/>
            <person name="Hance M."/>
            <person name="Tran K."/>
            <person name="Khouri H.M."/>
            <person name="Gill J."/>
            <person name="Utterback T.R."/>
            <person name="Feldblyum T.V."/>
            <person name="Wall J.D."/>
            <person name="Voordouw G."/>
            <person name="Fraser C.M."/>
        </authorList>
    </citation>
    <scope>NUCLEOTIDE SEQUENCE [LARGE SCALE GENOMIC DNA]</scope>
    <source>
        <strain>ATCC 29579 / DSM 644 / CCUG 34227 / NCIMB 8303 / VKM B-1760 / Hildenborough</strain>
    </source>
</reference>
<reference key="2">
    <citation type="journal article" date="1995" name="FEMS Microbiol. Lett.">
        <title>Purification and characterization of the formate dehydrogenase from Desulfovibrio vulgaris Hildenborough.</title>
        <authorList>
            <person name="Sebban C."/>
            <person name="Blanchard L."/>
            <person name="Bruschi M."/>
            <person name="Guerlesquin F."/>
        </authorList>
    </citation>
    <scope>PROTEIN SEQUENCE OF 2-21</scope>
    <scope>SUBUNIT</scope>
    <scope>SUBCELLULAR LOCATION</scope>
    <scope>BIOPHYSICOCHEMICAL PROPERTIES</scope>
</reference>
<reference key="3">
    <citation type="journal article" date="2005" name="Biochemistry">
        <title>Role of the tetrahemic subunit in Desulfovibrio vulgaris hildenborough formate dehydrogenase.</title>
        <authorList>
            <person name="ElAntak L."/>
            <person name="Dolla A."/>
            <person name="Durand M.C."/>
            <person name="Bianco P."/>
            <person name="Guerlesquin F."/>
        </authorList>
    </citation>
    <scope>SUBUNIT</scope>
    <scope>NOMENCLATURE</scope>
</reference>
<reference key="4">
    <citation type="journal article" date="2011" name="J. Bacteriol.">
        <title>Tungsten and molybdenum regulation of formate dehydrogenase expression in Desulfovibrio vulgaris Hildenborough.</title>
        <authorList>
            <person name="da Silva S.M."/>
            <person name="Pimentel C."/>
            <person name="Valente F.M."/>
            <person name="Rodrigues-Pousada C."/>
            <person name="Pereira I.A."/>
        </authorList>
    </citation>
    <scope>SUBUNIT</scope>
    <scope>INDUCTION BY MOLYBDENUM</scope>
    <scope>BIOPHYSICOCHEMICAL PROPERTIES</scope>
</reference>
<dbReference type="EMBL" id="AE017285">
    <property type="protein sequence ID" value="AAS97283.1"/>
    <property type="molecule type" value="Genomic_DNA"/>
</dbReference>
<dbReference type="RefSeq" id="WP_010940077.1">
    <property type="nucleotide sequence ID" value="NC_002937.3"/>
</dbReference>
<dbReference type="RefSeq" id="YP_012023.1">
    <property type="nucleotide sequence ID" value="NC_002937.3"/>
</dbReference>
<dbReference type="SMR" id="Q727P4"/>
<dbReference type="STRING" id="882.DVU_2811"/>
<dbReference type="PaxDb" id="882-DVU_2811"/>
<dbReference type="EnsemblBacteria" id="AAS97283">
    <property type="protein sequence ID" value="AAS97283"/>
    <property type="gene ID" value="DVU_2811"/>
</dbReference>
<dbReference type="KEGG" id="dvu:DVU_2811"/>
<dbReference type="PATRIC" id="fig|882.5.peg.2543"/>
<dbReference type="eggNOG" id="COG0437">
    <property type="taxonomic scope" value="Bacteria"/>
</dbReference>
<dbReference type="HOGENOM" id="CLU_043374_0_3_7"/>
<dbReference type="OrthoDB" id="9789030at2"/>
<dbReference type="PhylomeDB" id="Q727P4"/>
<dbReference type="BioCyc" id="MetaCyc:MONOMER-22135"/>
<dbReference type="Proteomes" id="UP000002194">
    <property type="component" value="Chromosome"/>
</dbReference>
<dbReference type="GO" id="GO:0009326">
    <property type="term" value="C:formate dehydrogenase complex"/>
    <property type="evidence" value="ECO:0000314"/>
    <property type="project" value="UniProtKB"/>
</dbReference>
<dbReference type="GO" id="GO:0042597">
    <property type="term" value="C:periplasmic space"/>
    <property type="evidence" value="ECO:0000314"/>
    <property type="project" value="UniProtKB"/>
</dbReference>
<dbReference type="GO" id="GO:0051539">
    <property type="term" value="F:4 iron, 4 sulfur cluster binding"/>
    <property type="evidence" value="ECO:0007669"/>
    <property type="project" value="UniProtKB-KW"/>
</dbReference>
<dbReference type="GO" id="GO:0046872">
    <property type="term" value="F:metal ion binding"/>
    <property type="evidence" value="ECO:0007669"/>
    <property type="project" value="UniProtKB-KW"/>
</dbReference>
<dbReference type="CDD" id="cd10559">
    <property type="entry name" value="W-FDH"/>
    <property type="match status" value="1"/>
</dbReference>
<dbReference type="Gene3D" id="3.30.70.20">
    <property type="match status" value="2"/>
</dbReference>
<dbReference type="InterPro" id="IPR017896">
    <property type="entry name" value="4Fe4S_Fe-S-bd"/>
</dbReference>
<dbReference type="InterPro" id="IPR051555">
    <property type="entry name" value="FDH_Electron_Transfer_Unit"/>
</dbReference>
<dbReference type="PANTHER" id="PTHR43545">
    <property type="entry name" value="FORMATE DEHYDROGENASE, NITRATE-INDUCIBLE, IRON-SULFUR SUBUNIT"/>
    <property type="match status" value="1"/>
</dbReference>
<dbReference type="PANTHER" id="PTHR43545:SF6">
    <property type="entry name" value="FORMATE DEHYDROGENASE, NITRATE-INDUCIBLE, IRON-SULFUR SUBUNIT"/>
    <property type="match status" value="1"/>
</dbReference>
<dbReference type="Pfam" id="PF13247">
    <property type="entry name" value="Fer4_11"/>
    <property type="match status" value="1"/>
</dbReference>
<dbReference type="SUPFAM" id="SSF54862">
    <property type="entry name" value="4Fe-4S ferredoxins"/>
    <property type="match status" value="1"/>
</dbReference>
<name>FDNGB_NITV2</name>
<comment type="function">
    <text evidence="5">Beta chain of the formate dehydrogenase (FDH) that catalyzes the reversible two-electron oxidation of formate to carbon dioxide. The beta chain is an electron transfer unit.</text>
</comment>
<comment type="cofactor">
    <cofactor evidence="1">
        <name>[4Fe-4S] cluster</name>
        <dbReference type="ChEBI" id="CHEBI:49883"/>
    </cofactor>
    <text evidence="1">Binds 3 [4Fe-4S] clusters.</text>
</comment>
<comment type="biophysicochemical properties">
    <kinetics>
        <KM evidence="5">1.7 mM for formate (at pH 9.5 and 30 degrees Celsius)</KM>
        <KM evidence="4">8 uM for formate (at pH 7.6)</KM>
        <Vmax evidence="4">77.0 umol/min/mg enzyme (at pH 7.6)</Vmax>
        <text evidence="4">Measurements have been done with the heterotrimer complex. kcat is 262 sec(-1) with formate as substrate (at pH 7.6).</text>
    </kinetics>
    <phDependence>
        <text evidence="5">Optimum pH is 9.5.</text>
    </phDependence>
    <temperatureDependence>
        <text evidence="5">Optimum temperature is 51 degrees Celsius.</text>
    </temperatureDependence>
</comment>
<comment type="subunit">
    <text evidence="3 4 5">Heterotrimer of cytochrome c3 FDH2C and formate dehydrogenase FDH2 alpha and beta subunits that forms the FdhABC(3) complex.</text>
</comment>
<comment type="subcellular location">
    <subcellularLocation>
        <location evidence="5">Periplasm</location>
    </subcellularLocation>
</comment>
<comment type="induction">
    <text evidence="4">The trimeric FdhABC(3) complex is the main formate dehydrogenase enzyme in the presence of molybdenum.</text>
</comment>
<protein>
    <recommendedName>
        <fullName evidence="6">Formate dehydrogenase 2 subunit beta (cytochrome c-553)</fullName>
        <shortName evidence="6">FDH2 subunit beta (cytochrome c-553)</shortName>
    </recommendedName>
    <alternativeName>
        <fullName>Formate dehydrogenase small subunit (cytochrome c-553)</fullName>
    </alternativeName>
</protein>
<keyword id="KW-0004">4Fe-4S</keyword>
<keyword id="KW-0903">Direct protein sequencing</keyword>
<keyword id="KW-0249">Electron transport</keyword>
<keyword id="KW-0408">Iron</keyword>
<keyword id="KW-0411">Iron-sulfur</keyword>
<keyword id="KW-0479">Metal-binding</keyword>
<keyword id="KW-0574">Periplasm</keyword>
<keyword id="KW-1185">Reference proteome</keyword>
<keyword id="KW-0677">Repeat</keyword>
<keyword id="KW-0813">Transport</keyword>
<feature type="initiator methionine" description="Removed" evidence="5">
    <location>
        <position position="1"/>
    </location>
</feature>
<feature type="chain" id="PRO_0000430781" description="Formate dehydrogenase 2 subunit beta (cytochrome c-553)">
    <location>
        <begin position="2"/>
        <end position="219"/>
    </location>
</feature>
<feature type="domain" description="4Fe-4S ferredoxin-type 1" evidence="1 2">
    <location>
        <begin position="3"/>
        <end position="32"/>
    </location>
</feature>
<feature type="domain" description="4Fe-4S ferredoxin-type 2" evidence="1">
    <location>
        <begin position="132"/>
        <end position="171"/>
    </location>
</feature>
<feature type="binding site" evidence="1">
    <location>
        <position position="12"/>
    </location>
    <ligand>
        <name>[4Fe-4S] cluster</name>
        <dbReference type="ChEBI" id="CHEBI:49883"/>
        <label>1</label>
    </ligand>
</feature>
<feature type="binding site" evidence="1">
    <location>
        <position position="15"/>
    </location>
    <ligand>
        <name>[4Fe-4S] cluster</name>
        <dbReference type="ChEBI" id="CHEBI:49883"/>
        <label>1</label>
    </ligand>
</feature>
<feature type="binding site" evidence="1">
    <location>
        <position position="18"/>
    </location>
    <ligand>
        <name>[4Fe-4S] cluster</name>
        <dbReference type="ChEBI" id="CHEBI:49883"/>
        <label>1</label>
    </ligand>
</feature>
<feature type="binding site" evidence="1">
    <location>
        <position position="22"/>
    </location>
    <ligand>
        <name>[4Fe-4S] cluster</name>
        <dbReference type="ChEBI" id="CHEBI:49883"/>
        <label>2</label>
    </ligand>
</feature>
<feature type="binding site" evidence="1">
    <location>
        <position position="74"/>
    </location>
    <ligand>
        <name>[4Fe-4S] cluster</name>
        <dbReference type="ChEBI" id="CHEBI:49883"/>
        <label>3</label>
    </ligand>
</feature>
<feature type="binding site" evidence="1">
    <location>
        <position position="77"/>
    </location>
    <ligand>
        <name>[4Fe-4S] cluster</name>
        <dbReference type="ChEBI" id="CHEBI:49883"/>
        <label>3</label>
    </ligand>
</feature>
<feature type="binding site" evidence="1">
    <location>
        <position position="82"/>
    </location>
    <ligand>
        <name>[4Fe-4S] cluster</name>
        <dbReference type="ChEBI" id="CHEBI:49883"/>
        <label>3</label>
    </ligand>
</feature>
<feature type="binding site" evidence="1">
    <location>
        <position position="124"/>
    </location>
    <ligand>
        <name>[4Fe-4S] cluster</name>
        <dbReference type="ChEBI" id="CHEBI:49883"/>
        <label>3</label>
    </ligand>
</feature>
<feature type="binding site" evidence="1">
    <location>
        <position position="141"/>
    </location>
    <ligand>
        <name>[4Fe-4S] cluster</name>
        <dbReference type="ChEBI" id="CHEBI:49883"/>
        <label>2</label>
    </ligand>
</feature>
<feature type="binding site" evidence="1">
    <location>
        <position position="144"/>
    </location>
    <ligand>
        <name>[4Fe-4S] cluster</name>
        <dbReference type="ChEBI" id="CHEBI:49883"/>
        <label>2</label>
    </ligand>
</feature>
<feature type="binding site" evidence="1">
    <location>
        <position position="156"/>
    </location>
    <ligand>
        <name>[4Fe-4S] cluster</name>
        <dbReference type="ChEBI" id="CHEBI:49883"/>
        <label>2</label>
    </ligand>
</feature>
<feature type="binding site" evidence="1">
    <location>
        <position position="160"/>
    </location>
    <ligand>
        <name>[4Fe-4S] cluster</name>
        <dbReference type="ChEBI" id="CHEBI:49883"/>
        <label>1</label>
    </ligand>
</feature>
<accession>Q727P4</accession>
<organism>
    <name type="scientific">Nitratidesulfovibrio vulgaris (strain ATCC 29579 / DSM 644 / CCUG 34227 / NCIMB 8303 / VKM B-1760 / Hildenborough)</name>
    <name type="common">Desulfovibrio vulgaris</name>
    <dbReference type="NCBI Taxonomy" id="882"/>
    <lineage>
        <taxon>Bacteria</taxon>
        <taxon>Pseudomonadati</taxon>
        <taxon>Thermodesulfobacteriota</taxon>
        <taxon>Desulfovibrionia</taxon>
        <taxon>Desulfovibrionales</taxon>
        <taxon>Desulfovibrionaceae</taxon>
        <taxon>Nitratidesulfovibrio</taxon>
    </lineage>
</organism>
<evidence type="ECO:0000250" key="1">
    <source>
        <dbReference type="UniProtKB" id="Q8GC87"/>
    </source>
</evidence>
<evidence type="ECO:0000255" key="2">
    <source>
        <dbReference type="PROSITE-ProRule" id="PRU00711"/>
    </source>
</evidence>
<evidence type="ECO:0000269" key="3">
    <source>
    </source>
</evidence>
<evidence type="ECO:0000269" key="4">
    <source>
    </source>
</evidence>
<evidence type="ECO:0000269" key="5">
    <source>
    </source>
</evidence>
<evidence type="ECO:0000303" key="6">
    <source>
    </source>
</evidence>
<evidence type="ECO:0000312" key="7">
    <source>
        <dbReference type="EMBL" id="AAS97283.1"/>
    </source>
</evidence>